<feature type="chain" id="PRO_1000023135" description="Peptide deformylase">
    <location>
        <begin position="1"/>
        <end position="177"/>
    </location>
</feature>
<feature type="active site" evidence="1">
    <location>
        <position position="142"/>
    </location>
</feature>
<feature type="binding site" evidence="1">
    <location>
        <position position="99"/>
    </location>
    <ligand>
        <name>Fe cation</name>
        <dbReference type="ChEBI" id="CHEBI:24875"/>
    </ligand>
</feature>
<feature type="binding site" evidence="1">
    <location>
        <position position="141"/>
    </location>
    <ligand>
        <name>Fe cation</name>
        <dbReference type="ChEBI" id="CHEBI:24875"/>
    </ligand>
</feature>
<feature type="binding site" evidence="1">
    <location>
        <position position="145"/>
    </location>
    <ligand>
        <name>Fe cation</name>
        <dbReference type="ChEBI" id="CHEBI:24875"/>
    </ligand>
</feature>
<accession>A5VDM3</accession>
<keyword id="KW-0378">Hydrolase</keyword>
<keyword id="KW-0408">Iron</keyword>
<keyword id="KW-0479">Metal-binding</keyword>
<keyword id="KW-0648">Protein biosynthesis</keyword>
<keyword id="KW-1185">Reference proteome</keyword>
<reference key="1">
    <citation type="journal article" date="2010" name="J. Bacteriol.">
        <title>Genome sequence of the dioxin-mineralizing bacterium Sphingomonas wittichii RW1.</title>
        <authorList>
            <person name="Miller T.R."/>
            <person name="Delcher A.L."/>
            <person name="Salzberg S.L."/>
            <person name="Saunders E."/>
            <person name="Detter J.C."/>
            <person name="Halden R.U."/>
        </authorList>
    </citation>
    <scope>NUCLEOTIDE SEQUENCE [LARGE SCALE GENOMIC DNA]</scope>
    <source>
        <strain>DSM 6014 / CCUG 31198 / JCM 15750 / NBRC 105917 / EY 4224 / RW1</strain>
    </source>
</reference>
<name>DEF_RHIWR</name>
<comment type="function">
    <text evidence="1">Removes the formyl group from the N-terminal Met of newly synthesized proteins. Requires at least a dipeptide for an efficient rate of reaction. N-terminal L-methionine is a prerequisite for activity but the enzyme has broad specificity at other positions.</text>
</comment>
<comment type="catalytic activity">
    <reaction evidence="1">
        <text>N-terminal N-formyl-L-methionyl-[peptide] + H2O = N-terminal L-methionyl-[peptide] + formate</text>
        <dbReference type="Rhea" id="RHEA:24420"/>
        <dbReference type="Rhea" id="RHEA-COMP:10639"/>
        <dbReference type="Rhea" id="RHEA-COMP:10640"/>
        <dbReference type="ChEBI" id="CHEBI:15377"/>
        <dbReference type="ChEBI" id="CHEBI:15740"/>
        <dbReference type="ChEBI" id="CHEBI:49298"/>
        <dbReference type="ChEBI" id="CHEBI:64731"/>
        <dbReference type="EC" id="3.5.1.88"/>
    </reaction>
</comment>
<comment type="cofactor">
    <cofactor evidence="1">
        <name>Fe(2+)</name>
        <dbReference type="ChEBI" id="CHEBI:29033"/>
    </cofactor>
    <text evidence="1">Binds 1 Fe(2+) ion.</text>
</comment>
<comment type="similarity">
    <text evidence="1">Belongs to the polypeptide deformylase family.</text>
</comment>
<proteinExistence type="inferred from homology"/>
<organism>
    <name type="scientific">Rhizorhabdus wittichii (strain DSM 6014 / CCUG 31198 / JCM 15750 / NBRC 105917 / EY 4224 / RW1)</name>
    <name type="common">Sphingomonas wittichii</name>
    <dbReference type="NCBI Taxonomy" id="392499"/>
    <lineage>
        <taxon>Bacteria</taxon>
        <taxon>Pseudomonadati</taxon>
        <taxon>Pseudomonadota</taxon>
        <taxon>Alphaproteobacteria</taxon>
        <taxon>Sphingomonadales</taxon>
        <taxon>Sphingomonadaceae</taxon>
        <taxon>Rhizorhabdus</taxon>
    </lineage>
</organism>
<gene>
    <name evidence="1" type="primary">def</name>
    <name type="ordered locus">Swit_4045</name>
</gene>
<protein>
    <recommendedName>
        <fullName evidence="1">Peptide deformylase</fullName>
        <shortName evidence="1">PDF</shortName>
        <ecNumber evidence="1">3.5.1.88</ecNumber>
    </recommendedName>
    <alternativeName>
        <fullName evidence="1">Polypeptide deformylase</fullName>
    </alternativeName>
</protein>
<evidence type="ECO:0000255" key="1">
    <source>
        <dbReference type="HAMAP-Rule" id="MF_00163"/>
    </source>
</evidence>
<dbReference type="EC" id="3.5.1.88" evidence="1"/>
<dbReference type="EMBL" id="CP000699">
    <property type="protein sequence ID" value="ABQ70389.1"/>
    <property type="molecule type" value="Genomic_DNA"/>
</dbReference>
<dbReference type="SMR" id="A5VDM3"/>
<dbReference type="STRING" id="392499.Swit_4045"/>
<dbReference type="PaxDb" id="392499-Swit_4045"/>
<dbReference type="KEGG" id="swi:Swit_4045"/>
<dbReference type="eggNOG" id="COG0242">
    <property type="taxonomic scope" value="Bacteria"/>
</dbReference>
<dbReference type="HOGENOM" id="CLU_061901_2_0_5"/>
<dbReference type="OrthoDB" id="9804313at2"/>
<dbReference type="Proteomes" id="UP000001989">
    <property type="component" value="Chromosome"/>
</dbReference>
<dbReference type="GO" id="GO:0046872">
    <property type="term" value="F:metal ion binding"/>
    <property type="evidence" value="ECO:0007669"/>
    <property type="project" value="UniProtKB-KW"/>
</dbReference>
<dbReference type="GO" id="GO:0042586">
    <property type="term" value="F:peptide deformylase activity"/>
    <property type="evidence" value="ECO:0007669"/>
    <property type="project" value="UniProtKB-UniRule"/>
</dbReference>
<dbReference type="GO" id="GO:0043686">
    <property type="term" value="P:co-translational protein modification"/>
    <property type="evidence" value="ECO:0007669"/>
    <property type="project" value="TreeGrafter"/>
</dbReference>
<dbReference type="GO" id="GO:0006412">
    <property type="term" value="P:translation"/>
    <property type="evidence" value="ECO:0007669"/>
    <property type="project" value="UniProtKB-UniRule"/>
</dbReference>
<dbReference type="CDD" id="cd00487">
    <property type="entry name" value="Pep_deformylase"/>
    <property type="match status" value="1"/>
</dbReference>
<dbReference type="Gene3D" id="3.90.45.10">
    <property type="entry name" value="Peptide deformylase"/>
    <property type="match status" value="1"/>
</dbReference>
<dbReference type="HAMAP" id="MF_00163">
    <property type="entry name" value="Pep_deformylase"/>
    <property type="match status" value="1"/>
</dbReference>
<dbReference type="InterPro" id="IPR023635">
    <property type="entry name" value="Peptide_deformylase"/>
</dbReference>
<dbReference type="InterPro" id="IPR036821">
    <property type="entry name" value="Peptide_deformylase_sf"/>
</dbReference>
<dbReference type="NCBIfam" id="TIGR00079">
    <property type="entry name" value="pept_deformyl"/>
    <property type="match status" value="1"/>
</dbReference>
<dbReference type="NCBIfam" id="NF001159">
    <property type="entry name" value="PRK00150.1-3"/>
    <property type="match status" value="1"/>
</dbReference>
<dbReference type="PANTHER" id="PTHR10458">
    <property type="entry name" value="PEPTIDE DEFORMYLASE"/>
    <property type="match status" value="1"/>
</dbReference>
<dbReference type="PANTHER" id="PTHR10458:SF22">
    <property type="entry name" value="PEPTIDE DEFORMYLASE"/>
    <property type="match status" value="1"/>
</dbReference>
<dbReference type="Pfam" id="PF01327">
    <property type="entry name" value="Pep_deformylase"/>
    <property type="match status" value="1"/>
</dbReference>
<dbReference type="PIRSF" id="PIRSF004749">
    <property type="entry name" value="Pep_def"/>
    <property type="match status" value="1"/>
</dbReference>
<dbReference type="PRINTS" id="PR01576">
    <property type="entry name" value="PDEFORMYLASE"/>
</dbReference>
<dbReference type="SUPFAM" id="SSF56420">
    <property type="entry name" value="Peptide deformylase"/>
    <property type="match status" value="1"/>
</dbReference>
<sequence length="177" mass="20154">MAIRLILEAPDPRLRTISTPVEAVDDELRALIADMFETMYDAPGIGLAAIQVGVPKRVLVIDLQEEEDAEGKPIRHPRVFINPELFDPSEEQSVYNEGCLSVPEQYAEVERPAVIHARWLDEQGAKHEERLEGLLATCLQHEMDHLEGILFIDHLSRLKREMVMKKLEKARRARKAA</sequence>